<comment type="function">
    <text evidence="1">Binds 16S rRNA, required for the assembly of 30S particles.</text>
</comment>
<comment type="cofactor">
    <cofactor evidence="1">
        <name>Zn(2+)</name>
        <dbReference type="ChEBI" id="CHEBI:29105"/>
    </cofactor>
    <text evidence="1">Binds 1 zinc ion per subunit.</text>
</comment>
<comment type="subunit">
    <text evidence="1">Part of the 30S ribosomal subunit.</text>
</comment>
<comment type="similarity">
    <text evidence="1">Belongs to the universal ribosomal protein uS14 family. Zinc-binding uS14 subfamily.</text>
</comment>
<accession>Q6LXD9</accession>
<sequence>MTKTPFKTKYGQGSKVCKRCGRKGPGIIRKYGLNLCRQCFRELAPKLGFKKYD</sequence>
<proteinExistence type="inferred from homology"/>
<reference key="1">
    <citation type="journal article" date="2004" name="J. Bacteriol.">
        <title>Complete genome sequence of the genetically tractable hydrogenotrophic methanogen Methanococcus maripaludis.</title>
        <authorList>
            <person name="Hendrickson E.L."/>
            <person name="Kaul R."/>
            <person name="Zhou Y."/>
            <person name="Bovee D."/>
            <person name="Chapman P."/>
            <person name="Chung J."/>
            <person name="Conway de Macario E."/>
            <person name="Dodsworth J.A."/>
            <person name="Gillett W."/>
            <person name="Graham D.E."/>
            <person name="Hackett M."/>
            <person name="Haydock A.K."/>
            <person name="Kang A."/>
            <person name="Land M.L."/>
            <person name="Levy R."/>
            <person name="Lie T.J."/>
            <person name="Major T.A."/>
            <person name="Moore B.C."/>
            <person name="Porat I."/>
            <person name="Palmeiri A."/>
            <person name="Rouse G."/>
            <person name="Saenphimmachak C."/>
            <person name="Soell D."/>
            <person name="Van Dien S."/>
            <person name="Wang T."/>
            <person name="Whitman W.B."/>
            <person name="Xia Q."/>
            <person name="Zhang Y."/>
            <person name="Larimer F.W."/>
            <person name="Olson M.V."/>
            <person name="Leigh J.A."/>
        </authorList>
    </citation>
    <scope>NUCLEOTIDE SEQUENCE [LARGE SCALE GENOMIC DNA]</scope>
    <source>
        <strain>DSM 14266 / JCM 13030 / NBRC 101832 / S2 / LL</strain>
    </source>
</reference>
<keyword id="KW-0479">Metal-binding</keyword>
<keyword id="KW-1185">Reference proteome</keyword>
<keyword id="KW-0687">Ribonucleoprotein</keyword>
<keyword id="KW-0689">Ribosomal protein</keyword>
<keyword id="KW-0694">RNA-binding</keyword>
<keyword id="KW-0699">rRNA-binding</keyword>
<keyword id="KW-0862">Zinc</keyword>
<evidence type="ECO:0000255" key="1">
    <source>
        <dbReference type="HAMAP-Rule" id="MF_01364"/>
    </source>
</evidence>
<evidence type="ECO:0000305" key="2"/>
<feature type="chain" id="PRO_0000269160" description="Small ribosomal subunit protein uS14">
    <location>
        <begin position="1"/>
        <end position="53"/>
    </location>
</feature>
<feature type="binding site" evidence="1">
    <location>
        <position position="17"/>
    </location>
    <ligand>
        <name>Zn(2+)</name>
        <dbReference type="ChEBI" id="CHEBI:29105"/>
    </ligand>
</feature>
<feature type="binding site" evidence="1">
    <location>
        <position position="20"/>
    </location>
    <ligand>
        <name>Zn(2+)</name>
        <dbReference type="ChEBI" id="CHEBI:29105"/>
    </ligand>
</feature>
<feature type="binding site" evidence="1">
    <location>
        <position position="36"/>
    </location>
    <ligand>
        <name>Zn(2+)</name>
        <dbReference type="ChEBI" id="CHEBI:29105"/>
    </ligand>
</feature>
<feature type="binding site" evidence="1">
    <location>
        <position position="39"/>
    </location>
    <ligand>
        <name>Zn(2+)</name>
        <dbReference type="ChEBI" id="CHEBI:29105"/>
    </ligand>
</feature>
<organism>
    <name type="scientific">Methanococcus maripaludis (strain DSM 14266 / JCM 13030 / NBRC 101832 / S2 / LL)</name>
    <dbReference type="NCBI Taxonomy" id="267377"/>
    <lineage>
        <taxon>Archaea</taxon>
        <taxon>Methanobacteriati</taxon>
        <taxon>Methanobacteriota</taxon>
        <taxon>Methanomada group</taxon>
        <taxon>Methanococci</taxon>
        <taxon>Methanococcales</taxon>
        <taxon>Methanococcaceae</taxon>
        <taxon>Methanococcus</taxon>
    </lineage>
</organism>
<protein>
    <recommendedName>
        <fullName evidence="1">Small ribosomal subunit protein uS14</fullName>
    </recommendedName>
    <alternativeName>
        <fullName evidence="2">30S ribosomal protein S14 type Z</fullName>
    </alternativeName>
</protein>
<dbReference type="EMBL" id="BX950229">
    <property type="protein sequence ID" value="CAF30969.1"/>
    <property type="molecule type" value="Genomic_DNA"/>
</dbReference>
<dbReference type="RefSeq" id="WP_011171357.1">
    <property type="nucleotide sequence ID" value="NC_005791.1"/>
</dbReference>
<dbReference type="SMR" id="Q6LXD9"/>
<dbReference type="STRING" id="267377.MMP1413"/>
<dbReference type="EnsemblBacteria" id="CAF30969">
    <property type="protein sequence ID" value="CAF30969"/>
    <property type="gene ID" value="MMP1413"/>
</dbReference>
<dbReference type="KEGG" id="mmp:MMP1413"/>
<dbReference type="PATRIC" id="fig|267377.15.peg.1449"/>
<dbReference type="eggNOG" id="arCOG00782">
    <property type="taxonomic scope" value="Archaea"/>
</dbReference>
<dbReference type="HOGENOM" id="CLU_177289_2_2_2"/>
<dbReference type="OrthoDB" id="5615at2157"/>
<dbReference type="Proteomes" id="UP000000590">
    <property type="component" value="Chromosome"/>
</dbReference>
<dbReference type="GO" id="GO:0022627">
    <property type="term" value="C:cytosolic small ribosomal subunit"/>
    <property type="evidence" value="ECO:0007669"/>
    <property type="project" value="TreeGrafter"/>
</dbReference>
<dbReference type="GO" id="GO:0019843">
    <property type="term" value="F:rRNA binding"/>
    <property type="evidence" value="ECO:0007669"/>
    <property type="project" value="UniProtKB-UniRule"/>
</dbReference>
<dbReference type="GO" id="GO:0003735">
    <property type="term" value="F:structural constituent of ribosome"/>
    <property type="evidence" value="ECO:0007669"/>
    <property type="project" value="InterPro"/>
</dbReference>
<dbReference type="GO" id="GO:0008270">
    <property type="term" value="F:zinc ion binding"/>
    <property type="evidence" value="ECO:0007669"/>
    <property type="project" value="UniProtKB-UniRule"/>
</dbReference>
<dbReference type="GO" id="GO:0002181">
    <property type="term" value="P:cytoplasmic translation"/>
    <property type="evidence" value="ECO:0007669"/>
    <property type="project" value="TreeGrafter"/>
</dbReference>
<dbReference type="FunFam" id="4.10.830.10:FF:000002">
    <property type="entry name" value="40S ribosomal protein S29"/>
    <property type="match status" value="1"/>
</dbReference>
<dbReference type="Gene3D" id="4.10.830.10">
    <property type="entry name" value="30s Ribosomal Protein S14, Chain N"/>
    <property type="match status" value="1"/>
</dbReference>
<dbReference type="HAMAP" id="MF_01364_A">
    <property type="entry name" value="Ribosomal_uS14_2_A"/>
    <property type="match status" value="1"/>
</dbReference>
<dbReference type="InterPro" id="IPR001209">
    <property type="entry name" value="Ribosomal_uS14"/>
</dbReference>
<dbReference type="InterPro" id="IPR023676">
    <property type="entry name" value="Ribosomal_uS14_arc"/>
</dbReference>
<dbReference type="InterPro" id="IPR018271">
    <property type="entry name" value="Ribosomal_uS14_CS"/>
</dbReference>
<dbReference type="InterPro" id="IPR039744">
    <property type="entry name" value="RIbosomal_uS14_euk_arc"/>
</dbReference>
<dbReference type="InterPro" id="IPR043140">
    <property type="entry name" value="Ribosomal_uS14_sf"/>
</dbReference>
<dbReference type="NCBIfam" id="NF004424">
    <property type="entry name" value="PRK05766.1"/>
    <property type="match status" value="1"/>
</dbReference>
<dbReference type="PANTHER" id="PTHR12010">
    <property type="entry name" value="40S RIBOSOMAL PROTEIN S29"/>
    <property type="match status" value="1"/>
</dbReference>
<dbReference type="PANTHER" id="PTHR12010:SF2">
    <property type="entry name" value="40S RIBOSOMAL PROTEIN S29"/>
    <property type="match status" value="1"/>
</dbReference>
<dbReference type="Pfam" id="PF00253">
    <property type="entry name" value="Ribosomal_S14"/>
    <property type="match status" value="1"/>
</dbReference>
<dbReference type="PROSITE" id="PS00527">
    <property type="entry name" value="RIBOSOMAL_S14"/>
    <property type="match status" value="1"/>
</dbReference>
<name>RS14Z_METMP</name>
<gene>
    <name evidence="1" type="primary">rps14</name>
    <name type="ordered locus">MMP1413</name>
</gene>